<organism>
    <name type="scientific">Drosophila melanogaster</name>
    <name type="common">Fruit fly</name>
    <dbReference type="NCBI Taxonomy" id="7227"/>
    <lineage>
        <taxon>Eukaryota</taxon>
        <taxon>Metazoa</taxon>
        <taxon>Ecdysozoa</taxon>
        <taxon>Arthropoda</taxon>
        <taxon>Hexapoda</taxon>
        <taxon>Insecta</taxon>
        <taxon>Pterygota</taxon>
        <taxon>Neoptera</taxon>
        <taxon>Endopterygota</taxon>
        <taxon>Diptera</taxon>
        <taxon>Brachycera</taxon>
        <taxon>Muscomorpha</taxon>
        <taxon>Ephydroidea</taxon>
        <taxon>Drosophilidae</taxon>
        <taxon>Drosophila</taxon>
        <taxon>Sophophora</taxon>
    </lineage>
</organism>
<dbReference type="EMBL" id="X66098">
    <property type="protein sequence ID" value="CAA46892.1"/>
    <property type="status" value="ALT_FRAME"/>
    <property type="molecule type" value="Genomic_DNA"/>
</dbReference>
<dbReference type="EMBL" id="X66097">
    <property type="protein sequence ID" value="CAA46891.1"/>
    <property type="status" value="ALT_FRAME"/>
    <property type="molecule type" value="mRNA"/>
</dbReference>
<dbReference type="EMBL" id="AE014134">
    <property type="protein sequence ID" value="AAF51057.1"/>
    <property type="molecule type" value="Genomic_DNA"/>
</dbReference>
<dbReference type="EMBL" id="AY071031">
    <property type="protein sequence ID" value="AAL48653.1"/>
    <property type="molecule type" value="mRNA"/>
</dbReference>
<dbReference type="EMBL" id="BT030401">
    <property type="protein sequence ID" value="ABO52820.1"/>
    <property type="molecule type" value="mRNA"/>
</dbReference>
<dbReference type="PIR" id="S23055">
    <property type="entry name" value="S23055"/>
</dbReference>
<dbReference type="PIR" id="S23056">
    <property type="entry name" value="S23056"/>
</dbReference>
<dbReference type="RefSeq" id="NP_476834.1">
    <property type="nucleotide sequence ID" value="NM_057486.4"/>
</dbReference>
<dbReference type="SMR" id="P32031"/>
<dbReference type="BioGRID" id="59811">
    <property type="interactions" value="7"/>
</dbReference>
<dbReference type="FunCoup" id="P32031">
    <property type="interactions" value="153"/>
</dbReference>
<dbReference type="IntAct" id="P32031">
    <property type="interactions" value="1"/>
</dbReference>
<dbReference type="STRING" id="7227.FBpp0077189"/>
<dbReference type="PaxDb" id="7227-FBpp0077189"/>
<dbReference type="DNASU" id="33608"/>
<dbReference type="EnsemblMetazoa" id="FBtr0077500">
    <property type="protein sequence ID" value="FBpp0077189"/>
    <property type="gene ID" value="FBgn0004567"/>
</dbReference>
<dbReference type="GeneID" id="33608"/>
<dbReference type="KEGG" id="dme:Dmel_CG2939"/>
<dbReference type="AGR" id="FB:FBgn0004567"/>
<dbReference type="CTD" id="33608"/>
<dbReference type="FlyBase" id="FBgn0004567">
    <property type="gene designation" value="slp2"/>
</dbReference>
<dbReference type="VEuPathDB" id="VectorBase:FBgn0004567"/>
<dbReference type="eggNOG" id="KOG2294">
    <property type="taxonomic scope" value="Eukaryota"/>
</dbReference>
<dbReference type="GeneTree" id="ENSGT00940000165356"/>
<dbReference type="InParanoid" id="P32031"/>
<dbReference type="OMA" id="YPQFGQF"/>
<dbReference type="OrthoDB" id="6230630at2759"/>
<dbReference type="Reactome" id="R-DME-9617828">
    <property type="pathway name" value="FOXO-mediated transcription of cell cycle genes"/>
</dbReference>
<dbReference type="SignaLink" id="P32031"/>
<dbReference type="BioGRID-ORCS" id="33608">
    <property type="hits" value="0 hits in 1 CRISPR screen"/>
</dbReference>
<dbReference type="GenomeRNAi" id="33608"/>
<dbReference type="PRO" id="PR:P32031"/>
<dbReference type="Proteomes" id="UP000000803">
    <property type="component" value="Chromosome 2L"/>
</dbReference>
<dbReference type="Bgee" id="FBgn0004567">
    <property type="expression patterns" value="Expressed in lamina monopolar neuron L2 (Drosophila) in brain and 57 other cell types or tissues"/>
</dbReference>
<dbReference type="ExpressionAtlas" id="P32031">
    <property type="expression patterns" value="baseline and differential"/>
</dbReference>
<dbReference type="GO" id="GO:0005634">
    <property type="term" value="C:nucleus"/>
    <property type="evidence" value="ECO:0000318"/>
    <property type="project" value="GO_Central"/>
</dbReference>
<dbReference type="GO" id="GO:0003700">
    <property type="term" value="F:DNA-binding transcription factor activity"/>
    <property type="evidence" value="ECO:0007669"/>
    <property type="project" value="InterPro"/>
</dbReference>
<dbReference type="GO" id="GO:1990837">
    <property type="term" value="F:sequence-specific double-stranded DNA binding"/>
    <property type="evidence" value="ECO:0000318"/>
    <property type="project" value="GO_Central"/>
</dbReference>
<dbReference type="GO" id="GO:0006357">
    <property type="term" value="P:regulation of transcription by RNA polymerase II"/>
    <property type="evidence" value="ECO:0000318"/>
    <property type="project" value="GO_Central"/>
</dbReference>
<dbReference type="GO" id="GO:0007367">
    <property type="term" value="P:segment polarity determination"/>
    <property type="evidence" value="ECO:0007669"/>
    <property type="project" value="UniProtKB-KW"/>
</dbReference>
<dbReference type="CDD" id="cd20021">
    <property type="entry name" value="FH_FOXG"/>
    <property type="match status" value="1"/>
</dbReference>
<dbReference type="FunFam" id="1.10.10.10:FF:000135">
    <property type="entry name" value="forkhead box protein G1"/>
    <property type="match status" value="1"/>
</dbReference>
<dbReference type="Gene3D" id="1.10.10.10">
    <property type="entry name" value="Winged helix-like DNA-binding domain superfamily/Winged helix DNA-binding domain"/>
    <property type="match status" value="1"/>
</dbReference>
<dbReference type="InterPro" id="IPR001766">
    <property type="entry name" value="Fork_head_dom"/>
</dbReference>
<dbReference type="InterPro" id="IPR047208">
    <property type="entry name" value="FOXG1"/>
</dbReference>
<dbReference type="InterPro" id="IPR018122">
    <property type="entry name" value="TF_fork_head_CS_1"/>
</dbReference>
<dbReference type="InterPro" id="IPR030456">
    <property type="entry name" value="TF_fork_head_CS_2"/>
</dbReference>
<dbReference type="InterPro" id="IPR036388">
    <property type="entry name" value="WH-like_DNA-bd_sf"/>
</dbReference>
<dbReference type="InterPro" id="IPR036390">
    <property type="entry name" value="WH_DNA-bd_sf"/>
</dbReference>
<dbReference type="PANTHER" id="PTHR46617">
    <property type="entry name" value="FORKHEAD BOX PROTEIN G1"/>
    <property type="match status" value="1"/>
</dbReference>
<dbReference type="PANTHER" id="PTHR46617:SF3">
    <property type="entry name" value="FORKHEAD BOX PROTEIN G1"/>
    <property type="match status" value="1"/>
</dbReference>
<dbReference type="Pfam" id="PF00250">
    <property type="entry name" value="Forkhead"/>
    <property type="match status" value="1"/>
</dbReference>
<dbReference type="PRINTS" id="PR00053">
    <property type="entry name" value="FORKHEAD"/>
</dbReference>
<dbReference type="SMART" id="SM00339">
    <property type="entry name" value="FH"/>
    <property type="match status" value="1"/>
</dbReference>
<dbReference type="SUPFAM" id="SSF46785">
    <property type="entry name" value="Winged helix' DNA-binding domain"/>
    <property type="match status" value="1"/>
</dbReference>
<dbReference type="PROSITE" id="PS00657">
    <property type="entry name" value="FORK_HEAD_1"/>
    <property type="match status" value="1"/>
</dbReference>
<dbReference type="PROSITE" id="PS00658">
    <property type="entry name" value="FORK_HEAD_2"/>
    <property type="match status" value="1"/>
</dbReference>
<dbReference type="PROSITE" id="PS50039">
    <property type="entry name" value="FORK_HEAD_3"/>
    <property type="match status" value="1"/>
</dbReference>
<keyword id="KW-0217">Developmental protein</keyword>
<keyword id="KW-0238">DNA-binding</keyword>
<keyword id="KW-0539">Nucleus</keyword>
<keyword id="KW-1185">Reference proteome</keyword>
<keyword id="KW-0709">Segmentation polarity protein</keyword>
<keyword id="KW-0804">Transcription</keyword>
<keyword id="KW-0805">Transcription regulation</keyword>
<sequence length="451" mass="49238">MVKIEEGLPSSEISAHSLHFQHHHHPLPPTTHHSALQSPHPVGLNLTNLMKMARTPHLKSSFSINSILPETVEHHDEDEEEDVEKKSPAKFPPNHNNNNLNTTNWGSPEDHEAESDPESDLDVTSMSPAPVANPNESDPDEVDEEFVEEDIECDGETTDGDAENKSNDGKPVKDKKGNEKPPYSYNALIMMAIRQSSEKRLTLNGIYEYIMTNHPYYRDNKQGWQNSIRHNLSLNKCFVKVPRHYDDPGKGNYWMLDPSAEDVFIGGSTGKLRRRTTAASRSRLAAFKRSLIGPMFPGLAAYPQFGQFLTYPPTAPSLLASMYQRYNPFAPKGGPGHPGLPPGLPGLPGPPGPQGPPGPPPPPFVAPPTSSELYQRLQYQQLLHQHAAAAALAAHQRQLSVAAASAASQPPPTHHHPHLAVGQAPLSPGGDSPGPSPQPLHKPVTVVSRNS</sequence>
<evidence type="ECO:0000255" key="1">
    <source>
        <dbReference type="PROSITE-ProRule" id="PRU00089"/>
    </source>
</evidence>
<evidence type="ECO:0000256" key="2">
    <source>
        <dbReference type="SAM" id="MobiDB-lite"/>
    </source>
</evidence>
<evidence type="ECO:0000269" key="3">
    <source>
    </source>
</evidence>
<evidence type="ECO:0000305" key="4"/>
<feature type="chain" id="PRO_0000091915" description="Fork head domain transcription factor slp2">
    <location>
        <begin position="1"/>
        <end position="451"/>
    </location>
</feature>
<feature type="DNA-binding region" description="Fork-head" evidence="1">
    <location>
        <begin position="180"/>
        <end position="274"/>
    </location>
</feature>
<feature type="region of interest" description="Disordered" evidence="2">
    <location>
        <begin position="22"/>
        <end position="42"/>
    </location>
</feature>
<feature type="region of interest" description="Disordered" evidence="2">
    <location>
        <begin position="73"/>
        <end position="181"/>
    </location>
</feature>
<feature type="region of interest" description="Disordered" evidence="2">
    <location>
        <begin position="330"/>
        <end position="369"/>
    </location>
</feature>
<feature type="region of interest" description="Disordered" evidence="2">
    <location>
        <begin position="402"/>
        <end position="451"/>
    </location>
</feature>
<feature type="compositionally biased region" description="Low complexity" evidence="2">
    <location>
        <begin position="94"/>
        <end position="104"/>
    </location>
</feature>
<feature type="compositionally biased region" description="Acidic residues" evidence="2">
    <location>
        <begin position="111"/>
        <end position="121"/>
    </location>
</feature>
<feature type="compositionally biased region" description="Acidic residues" evidence="2">
    <location>
        <begin position="137"/>
        <end position="161"/>
    </location>
</feature>
<feature type="compositionally biased region" description="Basic and acidic residues" evidence="2">
    <location>
        <begin position="162"/>
        <end position="179"/>
    </location>
</feature>
<feature type="compositionally biased region" description="Pro residues" evidence="2">
    <location>
        <begin position="338"/>
        <end position="366"/>
    </location>
</feature>
<feature type="compositionally biased region" description="Low complexity" evidence="2">
    <location>
        <begin position="419"/>
        <end position="430"/>
    </location>
</feature>
<feature type="sequence conflict" description="In Ref. 4; AAL48653 and 5; ABO52820." evidence="4" ref="4 5">
    <original>P</original>
    <variation>H</variation>
    <location>
        <position position="134"/>
    </location>
</feature>
<accession>P32031</accession>
<accession>Q8SZ95</accession>
<accession>Q9VQV5</accession>
<comment type="function">
    <text evidence="3">Transcription factor involved in segmentation. May function primarily as a segment polarity gene. Different levels of slp activity seem to be required in different segments.</text>
</comment>
<comment type="subcellular location">
    <subcellularLocation>
        <location evidence="1">Nucleus</location>
    </subcellularLocation>
</comment>
<comment type="tissue specificity">
    <text evidence="3">Expressed in the posterior half of each parasegment just anterior to the parasegmental boundary.</text>
</comment>
<comment type="developmental stage">
    <text evidence="3">Expression at 3-6 hours of embryogenesis. Strong re-expression in first-instar larvae.</text>
</comment>
<comment type="sequence caution" evidence="4">
    <conflict type="frameshift">
        <sequence resource="EMBL-CDS" id="CAA46891"/>
    </conflict>
</comment>
<comment type="sequence caution" evidence="4">
    <conflict type="frameshift">
        <sequence resource="EMBL-CDS" id="CAA46892"/>
    </conflict>
</comment>
<protein>
    <recommendedName>
        <fullName>Fork head domain transcription factor slp2</fullName>
    </recommendedName>
    <alternativeName>
        <fullName>Sloppy paired locus protein 2</fullName>
    </alternativeName>
</protein>
<reference key="1">
    <citation type="journal article" date="1992" name="Genes Dev.">
        <title>The Drosophila sloppy paired locus encodes two proteins involved in segmentation that show homology to mammalian transcription factors.</title>
        <authorList>
            <person name="Grossniklaus U."/>
            <person name="Pearson R.K."/>
            <person name="Gehring W.J."/>
        </authorList>
    </citation>
    <scope>NUCLEOTIDE SEQUENCE [GENOMIC DNA / MRNA]</scope>
    <scope>FUNCTION</scope>
    <scope>TISSUE SPECIFICITY</scope>
    <scope>DEVELOPMENTAL STAGE</scope>
    <source>
        <strain>Canton-S</strain>
        <strain>Oregon-R</strain>
    </source>
</reference>
<reference key="2">
    <citation type="journal article" date="2000" name="Science">
        <title>The genome sequence of Drosophila melanogaster.</title>
        <authorList>
            <person name="Adams M.D."/>
            <person name="Celniker S.E."/>
            <person name="Holt R.A."/>
            <person name="Evans C.A."/>
            <person name="Gocayne J.D."/>
            <person name="Amanatides P.G."/>
            <person name="Scherer S.E."/>
            <person name="Li P.W."/>
            <person name="Hoskins R.A."/>
            <person name="Galle R.F."/>
            <person name="George R.A."/>
            <person name="Lewis S.E."/>
            <person name="Richards S."/>
            <person name="Ashburner M."/>
            <person name="Henderson S.N."/>
            <person name="Sutton G.G."/>
            <person name="Wortman J.R."/>
            <person name="Yandell M.D."/>
            <person name="Zhang Q."/>
            <person name="Chen L.X."/>
            <person name="Brandon R.C."/>
            <person name="Rogers Y.-H.C."/>
            <person name="Blazej R.G."/>
            <person name="Champe M."/>
            <person name="Pfeiffer B.D."/>
            <person name="Wan K.H."/>
            <person name="Doyle C."/>
            <person name="Baxter E.G."/>
            <person name="Helt G."/>
            <person name="Nelson C.R."/>
            <person name="Miklos G.L.G."/>
            <person name="Abril J.F."/>
            <person name="Agbayani A."/>
            <person name="An H.-J."/>
            <person name="Andrews-Pfannkoch C."/>
            <person name="Baldwin D."/>
            <person name="Ballew R.M."/>
            <person name="Basu A."/>
            <person name="Baxendale J."/>
            <person name="Bayraktaroglu L."/>
            <person name="Beasley E.M."/>
            <person name="Beeson K.Y."/>
            <person name="Benos P.V."/>
            <person name="Berman B.P."/>
            <person name="Bhandari D."/>
            <person name="Bolshakov S."/>
            <person name="Borkova D."/>
            <person name="Botchan M.R."/>
            <person name="Bouck J."/>
            <person name="Brokstein P."/>
            <person name="Brottier P."/>
            <person name="Burtis K.C."/>
            <person name="Busam D.A."/>
            <person name="Butler H."/>
            <person name="Cadieu E."/>
            <person name="Center A."/>
            <person name="Chandra I."/>
            <person name="Cherry J.M."/>
            <person name="Cawley S."/>
            <person name="Dahlke C."/>
            <person name="Davenport L.B."/>
            <person name="Davies P."/>
            <person name="de Pablos B."/>
            <person name="Delcher A."/>
            <person name="Deng Z."/>
            <person name="Mays A.D."/>
            <person name="Dew I."/>
            <person name="Dietz S.M."/>
            <person name="Dodson K."/>
            <person name="Doup L.E."/>
            <person name="Downes M."/>
            <person name="Dugan-Rocha S."/>
            <person name="Dunkov B.C."/>
            <person name="Dunn P."/>
            <person name="Durbin K.J."/>
            <person name="Evangelista C.C."/>
            <person name="Ferraz C."/>
            <person name="Ferriera S."/>
            <person name="Fleischmann W."/>
            <person name="Fosler C."/>
            <person name="Gabrielian A.E."/>
            <person name="Garg N.S."/>
            <person name="Gelbart W.M."/>
            <person name="Glasser K."/>
            <person name="Glodek A."/>
            <person name="Gong F."/>
            <person name="Gorrell J.H."/>
            <person name="Gu Z."/>
            <person name="Guan P."/>
            <person name="Harris M."/>
            <person name="Harris N.L."/>
            <person name="Harvey D.A."/>
            <person name="Heiman T.J."/>
            <person name="Hernandez J.R."/>
            <person name="Houck J."/>
            <person name="Hostin D."/>
            <person name="Houston K.A."/>
            <person name="Howland T.J."/>
            <person name="Wei M.-H."/>
            <person name="Ibegwam C."/>
            <person name="Jalali M."/>
            <person name="Kalush F."/>
            <person name="Karpen G.H."/>
            <person name="Ke Z."/>
            <person name="Kennison J.A."/>
            <person name="Ketchum K.A."/>
            <person name="Kimmel B.E."/>
            <person name="Kodira C.D."/>
            <person name="Kraft C.L."/>
            <person name="Kravitz S."/>
            <person name="Kulp D."/>
            <person name="Lai Z."/>
            <person name="Lasko P."/>
            <person name="Lei Y."/>
            <person name="Levitsky A.A."/>
            <person name="Li J.H."/>
            <person name="Li Z."/>
            <person name="Liang Y."/>
            <person name="Lin X."/>
            <person name="Liu X."/>
            <person name="Mattei B."/>
            <person name="McIntosh T.C."/>
            <person name="McLeod M.P."/>
            <person name="McPherson D."/>
            <person name="Merkulov G."/>
            <person name="Milshina N.V."/>
            <person name="Mobarry C."/>
            <person name="Morris J."/>
            <person name="Moshrefi A."/>
            <person name="Mount S.M."/>
            <person name="Moy M."/>
            <person name="Murphy B."/>
            <person name="Murphy L."/>
            <person name="Muzny D.M."/>
            <person name="Nelson D.L."/>
            <person name="Nelson D.R."/>
            <person name="Nelson K.A."/>
            <person name="Nixon K."/>
            <person name="Nusskern D.R."/>
            <person name="Pacleb J.M."/>
            <person name="Palazzolo M."/>
            <person name="Pittman G.S."/>
            <person name="Pan S."/>
            <person name="Pollard J."/>
            <person name="Puri V."/>
            <person name="Reese M.G."/>
            <person name="Reinert K."/>
            <person name="Remington K."/>
            <person name="Saunders R.D.C."/>
            <person name="Scheeler F."/>
            <person name="Shen H."/>
            <person name="Shue B.C."/>
            <person name="Siden-Kiamos I."/>
            <person name="Simpson M."/>
            <person name="Skupski M.P."/>
            <person name="Smith T.J."/>
            <person name="Spier E."/>
            <person name="Spradling A.C."/>
            <person name="Stapleton M."/>
            <person name="Strong R."/>
            <person name="Sun E."/>
            <person name="Svirskas R."/>
            <person name="Tector C."/>
            <person name="Turner R."/>
            <person name="Venter E."/>
            <person name="Wang A.H."/>
            <person name="Wang X."/>
            <person name="Wang Z.-Y."/>
            <person name="Wassarman D.A."/>
            <person name="Weinstock G.M."/>
            <person name="Weissenbach J."/>
            <person name="Williams S.M."/>
            <person name="Woodage T."/>
            <person name="Worley K.C."/>
            <person name="Wu D."/>
            <person name="Yang S."/>
            <person name="Yao Q.A."/>
            <person name="Ye J."/>
            <person name="Yeh R.-F."/>
            <person name="Zaveri J.S."/>
            <person name="Zhan M."/>
            <person name="Zhang G."/>
            <person name="Zhao Q."/>
            <person name="Zheng L."/>
            <person name="Zheng X.H."/>
            <person name="Zhong F.N."/>
            <person name="Zhong W."/>
            <person name="Zhou X."/>
            <person name="Zhu S.C."/>
            <person name="Zhu X."/>
            <person name="Smith H.O."/>
            <person name="Gibbs R.A."/>
            <person name="Myers E.W."/>
            <person name="Rubin G.M."/>
            <person name="Venter J.C."/>
        </authorList>
    </citation>
    <scope>NUCLEOTIDE SEQUENCE [LARGE SCALE GENOMIC DNA]</scope>
    <source>
        <strain>Berkeley</strain>
    </source>
</reference>
<reference key="3">
    <citation type="journal article" date="2002" name="Genome Biol.">
        <title>Annotation of the Drosophila melanogaster euchromatic genome: a systematic review.</title>
        <authorList>
            <person name="Misra S."/>
            <person name="Crosby M.A."/>
            <person name="Mungall C.J."/>
            <person name="Matthews B.B."/>
            <person name="Campbell K.S."/>
            <person name="Hradecky P."/>
            <person name="Huang Y."/>
            <person name="Kaminker J.S."/>
            <person name="Millburn G.H."/>
            <person name="Prochnik S.E."/>
            <person name="Smith C.D."/>
            <person name="Tupy J.L."/>
            <person name="Whitfield E.J."/>
            <person name="Bayraktaroglu L."/>
            <person name="Berman B.P."/>
            <person name="Bettencourt B.R."/>
            <person name="Celniker S.E."/>
            <person name="de Grey A.D.N.J."/>
            <person name="Drysdale R.A."/>
            <person name="Harris N.L."/>
            <person name="Richter J."/>
            <person name="Russo S."/>
            <person name="Schroeder A.J."/>
            <person name="Shu S.Q."/>
            <person name="Stapleton M."/>
            <person name="Yamada C."/>
            <person name="Ashburner M."/>
            <person name="Gelbart W.M."/>
            <person name="Rubin G.M."/>
            <person name="Lewis S.E."/>
        </authorList>
    </citation>
    <scope>GENOME REANNOTATION</scope>
    <source>
        <strain>Berkeley</strain>
    </source>
</reference>
<reference key="4">
    <citation type="journal article" date="2002" name="Genome Biol.">
        <title>A Drosophila full-length cDNA resource.</title>
        <authorList>
            <person name="Stapleton M."/>
            <person name="Carlson J.W."/>
            <person name="Brokstein P."/>
            <person name="Yu C."/>
            <person name="Champe M."/>
            <person name="George R.A."/>
            <person name="Guarin H."/>
            <person name="Kronmiller B."/>
            <person name="Pacleb J.M."/>
            <person name="Park S."/>
            <person name="Wan K.H."/>
            <person name="Rubin G.M."/>
            <person name="Celniker S.E."/>
        </authorList>
    </citation>
    <scope>NUCLEOTIDE SEQUENCE [LARGE SCALE MRNA]</scope>
    <source>
        <strain>Berkeley</strain>
        <tissue>Embryo</tissue>
    </source>
</reference>
<reference key="5">
    <citation type="submission" date="2007-03" db="EMBL/GenBank/DDBJ databases">
        <authorList>
            <person name="Stapleton M."/>
            <person name="Carlson J."/>
            <person name="Frise E."/>
            <person name="Kapadia B."/>
            <person name="Park S."/>
            <person name="Wan K."/>
            <person name="Yu C."/>
            <person name="Celniker S."/>
        </authorList>
    </citation>
    <scope>NUCLEOTIDE SEQUENCE [LARGE SCALE MRNA]</scope>
    <source>
        <strain>Berkeley</strain>
    </source>
</reference>
<proteinExistence type="evidence at transcript level"/>
<name>SLP2_DROME</name>
<gene>
    <name type="primary">slp2</name>
    <name type="ORF">CG2939</name>
</gene>